<gene>
    <name evidence="1" type="primary">rplD</name>
    <name type="ordered locus">MXAN_3300</name>
</gene>
<evidence type="ECO:0000255" key="1">
    <source>
        <dbReference type="HAMAP-Rule" id="MF_01328"/>
    </source>
</evidence>
<evidence type="ECO:0000256" key="2">
    <source>
        <dbReference type="SAM" id="MobiDB-lite"/>
    </source>
</evidence>
<evidence type="ECO:0000305" key="3"/>
<name>RL4_MYXXD</name>
<dbReference type="EMBL" id="CP000113">
    <property type="protein sequence ID" value="ABF90616.1"/>
    <property type="molecule type" value="Genomic_DNA"/>
</dbReference>
<dbReference type="RefSeq" id="WP_002633607.1">
    <property type="nucleotide sequence ID" value="NC_008095.1"/>
</dbReference>
<dbReference type="SMR" id="Q1D774"/>
<dbReference type="STRING" id="246197.MXAN_3300"/>
<dbReference type="EnsemblBacteria" id="ABF90616">
    <property type="protein sequence ID" value="ABF90616"/>
    <property type="gene ID" value="MXAN_3300"/>
</dbReference>
<dbReference type="GeneID" id="41360653"/>
<dbReference type="KEGG" id="mxa:MXAN_3300"/>
<dbReference type="eggNOG" id="COG0088">
    <property type="taxonomic scope" value="Bacteria"/>
</dbReference>
<dbReference type="HOGENOM" id="CLU_041575_5_2_7"/>
<dbReference type="OrthoDB" id="9803201at2"/>
<dbReference type="Proteomes" id="UP000002402">
    <property type="component" value="Chromosome"/>
</dbReference>
<dbReference type="GO" id="GO:1990904">
    <property type="term" value="C:ribonucleoprotein complex"/>
    <property type="evidence" value="ECO:0007669"/>
    <property type="project" value="UniProtKB-KW"/>
</dbReference>
<dbReference type="GO" id="GO:0005840">
    <property type="term" value="C:ribosome"/>
    <property type="evidence" value="ECO:0007669"/>
    <property type="project" value="UniProtKB-KW"/>
</dbReference>
<dbReference type="GO" id="GO:0019843">
    <property type="term" value="F:rRNA binding"/>
    <property type="evidence" value="ECO:0007669"/>
    <property type="project" value="UniProtKB-UniRule"/>
</dbReference>
<dbReference type="GO" id="GO:0003735">
    <property type="term" value="F:structural constituent of ribosome"/>
    <property type="evidence" value="ECO:0007669"/>
    <property type="project" value="InterPro"/>
</dbReference>
<dbReference type="GO" id="GO:0006412">
    <property type="term" value="P:translation"/>
    <property type="evidence" value="ECO:0007669"/>
    <property type="project" value="UniProtKB-UniRule"/>
</dbReference>
<dbReference type="Gene3D" id="3.40.1370.10">
    <property type="match status" value="1"/>
</dbReference>
<dbReference type="HAMAP" id="MF_01328_B">
    <property type="entry name" value="Ribosomal_uL4_B"/>
    <property type="match status" value="1"/>
</dbReference>
<dbReference type="InterPro" id="IPR002136">
    <property type="entry name" value="Ribosomal_uL4"/>
</dbReference>
<dbReference type="InterPro" id="IPR013005">
    <property type="entry name" value="Ribosomal_uL4-like"/>
</dbReference>
<dbReference type="InterPro" id="IPR023574">
    <property type="entry name" value="Ribosomal_uL4_dom_sf"/>
</dbReference>
<dbReference type="NCBIfam" id="TIGR03953">
    <property type="entry name" value="rplD_bact"/>
    <property type="match status" value="1"/>
</dbReference>
<dbReference type="PANTHER" id="PTHR10746">
    <property type="entry name" value="50S RIBOSOMAL PROTEIN L4"/>
    <property type="match status" value="1"/>
</dbReference>
<dbReference type="PANTHER" id="PTHR10746:SF6">
    <property type="entry name" value="LARGE RIBOSOMAL SUBUNIT PROTEIN UL4M"/>
    <property type="match status" value="1"/>
</dbReference>
<dbReference type="Pfam" id="PF00573">
    <property type="entry name" value="Ribosomal_L4"/>
    <property type="match status" value="1"/>
</dbReference>
<dbReference type="SUPFAM" id="SSF52166">
    <property type="entry name" value="Ribosomal protein L4"/>
    <property type="match status" value="1"/>
</dbReference>
<comment type="function">
    <text evidence="1">One of the primary rRNA binding proteins, this protein initially binds near the 5'-end of the 23S rRNA. It is important during the early stages of 50S assembly. It makes multiple contacts with different domains of the 23S rRNA in the assembled 50S subunit and ribosome.</text>
</comment>
<comment type="function">
    <text evidence="1">Forms part of the polypeptide exit tunnel.</text>
</comment>
<comment type="subunit">
    <text evidence="1">Part of the 50S ribosomal subunit.</text>
</comment>
<comment type="similarity">
    <text evidence="1">Belongs to the universal ribosomal protein uL4 family.</text>
</comment>
<feature type="chain" id="PRO_1000052450" description="Large ribosomal subunit protein uL4">
    <location>
        <begin position="1"/>
        <end position="207"/>
    </location>
</feature>
<feature type="region of interest" description="Disordered" evidence="2">
    <location>
        <begin position="52"/>
        <end position="76"/>
    </location>
</feature>
<protein>
    <recommendedName>
        <fullName evidence="1">Large ribosomal subunit protein uL4</fullName>
    </recommendedName>
    <alternativeName>
        <fullName evidence="3">50S ribosomal protein L4</fullName>
    </alternativeName>
</protein>
<accession>Q1D774</accession>
<sequence>MAKFDVVDLDLKKVSEIELSDDVFGTEPNAHLFYEVAKMQQINRRRGTVGVKNTSLVSGGGKKPWKQKGTGRARQGSIRASHWVGGGKAMAPKARDYFYRPPRKVRRGALKSALSLRAQEKTLIILDGFSLDAPKSKQAFEVLTKRLKLQNALVIDDKGNTNLHRSVRNLAKFDVLPPEGLNLEAVLRHSHLVLTSAAAKTLEGALS</sequence>
<reference key="1">
    <citation type="journal article" date="2006" name="Proc. Natl. Acad. Sci. U.S.A.">
        <title>Evolution of sensory complexity recorded in a myxobacterial genome.</title>
        <authorList>
            <person name="Goldman B.S."/>
            <person name="Nierman W.C."/>
            <person name="Kaiser D."/>
            <person name="Slater S.C."/>
            <person name="Durkin A.S."/>
            <person name="Eisen J.A."/>
            <person name="Ronning C.M."/>
            <person name="Barbazuk W.B."/>
            <person name="Blanchard M."/>
            <person name="Field C."/>
            <person name="Halling C."/>
            <person name="Hinkle G."/>
            <person name="Iartchuk O."/>
            <person name="Kim H.S."/>
            <person name="Mackenzie C."/>
            <person name="Madupu R."/>
            <person name="Miller N."/>
            <person name="Shvartsbeyn A."/>
            <person name="Sullivan S.A."/>
            <person name="Vaudin M."/>
            <person name="Wiegand R."/>
            <person name="Kaplan H.B."/>
        </authorList>
    </citation>
    <scope>NUCLEOTIDE SEQUENCE [LARGE SCALE GENOMIC DNA]</scope>
    <source>
        <strain>DK1622</strain>
    </source>
</reference>
<proteinExistence type="inferred from homology"/>
<keyword id="KW-1185">Reference proteome</keyword>
<keyword id="KW-0687">Ribonucleoprotein</keyword>
<keyword id="KW-0689">Ribosomal protein</keyword>
<keyword id="KW-0694">RNA-binding</keyword>
<keyword id="KW-0699">rRNA-binding</keyword>
<organism>
    <name type="scientific">Myxococcus xanthus (strain DK1622)</name>
    <dbReference type="NCBI Taxonomy" id="246197"/>
    <lineage>
        <taxon>Bacteria</taxon>
        <taxon>Pseudomonadati</taxon>
        <taxon>Myxococcota</taxon>
        <taxon>Myxococcia</taxon>
        <taxon>Myxococcales</taxon>
        <taxon>Cystobacterineae</taxon>
        <taxon>Myxococcaceae</taxon>
        <taxon>Myxococcus</taxon>
    </lineage>
</organism>